<accession>Q8XD03</accession>
<sequence length="387" mass="41130">MSVIKMTDLDLAGKRVFIRADLNVPVKDGKVTSDARIRASLPTIELALKQGAKVMVTSHLGRPTEGEYNEEFSLLPVVNYLKDKLSNPVRLVKDYLDGVDVAEGELVVLENVRFNKGEKKDDEILSKKYAALCDVFVMDAFGTAHRAQASTHGIGKFADVACAGPLLAAELDALGKALKEPARPMVAIVGGSKVSTKLTVLDSLSKIADQLIVGGGIANTFIAAQGHDVGKSLYEADLVDEAKRLLTTCNIPVPSDVRVATEFSETAPATLKSVNDVKADEQILDIGDASAQELAEILKNAKTILWNGPVGVFEFPNFRKGTEIVANAIADSEAFSIAGGGDTLAAIDLFGIADKISYISTGGGAFLEFVEGKVLPAVAMLEERAKK</sequence>
<comment type="catalytic activity">
    <reaction>
        <text>(2R)-3-phosphoglycerate + ATP = (2R)-3-phospho-glyceroyl phosphate + ADP</text>
        <dbReference type="Rhea" id="RHEA:14801"/>
        <dbReference type="ChEBI" id="CHEBI:30616"/>
        <dbReference type="ChEBI" id="CHEBI:57604"/>
        <dbReference type="ChEBI" id="CHEBI:58272"/>
        <dbReference type="ChEBI" id="CHEBI:456216"/>
        <dbReference type="EC" id="2.7.2.3"/>
    </reaction>
</comment>
<comment type="pathway">
    <text>Carbohydrate degradation; glycolysis; pyruvate from D-glyceraldehyde 3-phosphate: step 2/5.</text>
</comment>
<comment type="subunit">
    <text evidence="1">Monomer.</text>
</comment>
<comment type="subcellular location">
    <subcellularLocation>
        <location evidence="2">Cytoplasm</location>
    </subcellularLocation>
</comment>
<comment type="similarity">
    <text evidence="2">Belongs to the phosphoglycerate kinase family.</text>
</comment>
<dbReference type="EC" id="2.7.2.3"/>
<dbReference type="EMBL" id="AE005174">
    <property type="protein sequence ID" value="AAG58052.1"/>
    <property type="molecule type" value="Genomic_DNA"/>
</dbReference>
<dbReference type="EMBL" id="BA000007">
    <property type="protein sequence ID" value="BAB37220.1"/>
    <property type="molecule type" value="Genomic_DNA"/>
</dbReference>
<dbReference type="PIR" id="E91103">
    <property type="entry name" value="E91103"/>
</dbReference>
<dbReference type="PIR" id="H85948">
    <property type="entry name" value="H85948"/>
</dbReference>
<dbReference type="RefSeq" id="NP_311824.1">
    <property type="nucleotide sequence ID" value="NC_002695.1"/>
</dbReference>
<dbReference type="RefSeq" id="WP_001301560.1">
    <property type="nucleotide sequence ID" value="NZ_VOAI01000003.1"/>
</dbReference>
<dbReference type="SMR" id="Q8XD03"/>
<dbReference type="STRING" id="155864.Z4265"/>
<dbReference type="GeneID" id="916382"/>
<dbReference type="KEGG" id="ece:Z4265"/>
<dbReference type="KEGG" id="ecs:ECs_3797"/>
<dbReference type="PATRIC" id="fig|386585.9.peg.3963"/>
<dbReference type="eggNOG" id="COG0126">
    <property type="taxonomic scope" value="Bacteria"/>
</dbReference>
<dbReference type="HOGENOM" id="CLU_025427_0_2_6"/>
<dbReference type="OMA" id="DMIFDIG"/>
<dbReference type="UniPathway" id="UPA00109">
    <property type="reaction ID" value="UER00185"/>
</dbReference>
<dbReference type="Proteomes" id="UP000000558">
    <property type="component" value="Chromosome"/>
</dbReference>
<dbReference type="Proteomes" id="UP000002519">
    <property type="component" value="Chromosome"/>
</dbReference>
<dbReference type="GO" id="GO:0005829">
    <property type="term" value="C:cytosol"/>
    <property type="evidence" value="ECO:0007669"/>
    <property type="project" value="TreeGrafter"/>
</dbReference>
<dbReference type="GO" id="GO:0043531">
    <property type="term" value="F:ADP binding"/>
    <property type="evidence" value="ECO:0007669"/>
    <property type="project" value="TreeGrafter"/>
</dbReference>
<dbReference type="GO" id="GO:0005524">
    <property type="term" value="F:ATP binding"/>
    <property type="evidence" value="ECO:0007669"/>
    <property type="project" value="UniProtKB-KW"/>
</dbReference>
<dbReference type="GO" id="GO:0004618">
    <property type="term" value="F:phosphoglycerate kinase activity"/>
    <property type="evidence" value="ECO:0007669"/>
    <property type="project" value="UniProtKB-UniRule"/>
</dbReference>
<dbReference type="GO" id="GO:0006094">
    <property type="term" value="P:gluconeogenesis"/>
    <property type="evidence" value="ECO:0007669"/>
    <property type="project" value="TreeGrafter"/>
</dbReference>
<dbReference type="GO" id="GO:0006096">
    <property type="term" value="P:glycolytic process"/>
    <property type="evidence" value="ECO:0007669"/>
    <property type="project" value="UniProtKB-UniRule"/>
</dbReference>
<dbReference type="FunFam" id="3.40.50.1260:FF:000001">
    <property type="entry name" value="Phosphoglycerate kinase"/>
    <property type="match status" value="1"/>
</dbReference>
<dbReference type="FunFam" id="3.40.50.1260:FF:000002">
    <property type="entry name" value="Phosphoglycerate kinase"/>
    <property type="match status" value="1"/>
</dbReference>
<dbReference type="Gene3D" id="3.40.50.1260">
    <property type="entry name" value="Phosphoglycerate kinase, N-terminal domain"/>
    <property type="match status" value="2"/>
</dbReference>
<dbReference type="HAMAP" id="MF_00145">
    <property type="entry name" value="Phosphoglyc_kinase"/>
    <property type="match status" value="1"/>
</dbReference>
<dbReference type="InterPro" id="IPR001576">
    <property type="entry name" value="Phosphoglycerate_kinase"/>
</dbReference>
<dbReference type="InterPro" id="IPR015911">
    <property type="entry name" value="Phosphoglycerate_kinase_CS"/>
</dbReference>
<dbReference type="InterPro" id="IPR015824">
    <property type="entry name" value="Phosphoglycerate_kinase_N"/>
</dbReference>
<dbReference type="InterPro" id="IPR036043">
    <property type="entry name" value="Phosphoglycerate_kinase_sf"/>
</dbReference>
<dbReference type="PANTHER" id="PTHR11406">
    <property type="entry name" value="PHOSPHOGLYCERATE KINASE"/>
    <property type="match status" value="1"/>
</dbReference>
<dbReference type="PANTHER" id="PTHR11406:SF23">
    <property type="entry name" value="PHOSPHOGLYCERATE KINASE 1, CHLOROPLASTIC-RELATED"/>
    <property type="match status" value="1"/>
</dbReference>
<dbReference type="Pfam" id="PF00162">
    <property type="entry name" value="PGK"/>
    <property type="match status" value="1"/>
</dbReference>
<dbReference type="PIRSF" id="PIRSF000724">
    <property type="entry name" value="Pgk"/>
    <property type="match status" value="1"/>
</dbReference>
<dbReference type="PRINTS" id="PR00477">
    <property type="entry name" value="PHGLYCKINASE"/>
</dbReference>
<dbReference type="SUPFAM" id="SSF53748">
    <property type="entry name" value="Phosphoglycerate kinase"/>
    <property type="match status" value="1"/>
</dbReference>
<dbReference type="PROSITE" id="PS00111">
    <property type="entry name" value="PGLYCERATE_KINASE"/>
    <property type="match status" value="1"/>
</dbReference>
<organism>
    <name type="scientific">Escherichia coli O157:H7</name>
    <dbReference type="NCBI Taxonomy" id="83334"/>
    <lineage>
        <taxon>Bacteria</taxon>
        <taxon>Pseudomonadati</taxon>
        <taxon>Pseudomonadota</taxon>
        <taxon>Gammaproteobacteria</taxon>
        <taxon>Enterobacterales</taxon>
        <taxon>Enterobacteriaceae</taxon>
        <taxon>Escherichia</taxon>
    </lineage>
</organism>
<feature type="initiator methionine" description="Removed" evidence="1">
    <location>
        <position position="1"/>
    </location>
</feature>
<feature type="chain" id="PRO_0000145943" description="Phosphoglycerate kinase">
    <location>
        <begin position="2"/>
        <end position="387"/>
    </location>
</feature>
<feature type="binding site" evidence="1">
    <location>
        <begin position="21"/>
        <end position="23"/>
    </location>
    <ligand>
        <name>substrate</name>
    </ligand>
</feature>
<feature type="binding site" evidence="1">
    <location>
        <position position="36"/>
    </location>
    <ligand>
        <name>substrate</name>
    </ligand>
</feature>
<feature type="binding site" evidence="1">
    <location>
        <begin position="59"/>
        <end position="62"/>
    </location>
    <ligand>
        <name>substrate</name>
    </ligand>
</feature>
<feature type="binding site" evidence="1">
    <location>
        <position position="113"/>
    </location>
    <ligand>
        <name>substrate</name>
    </ligand>
</feature>
<feature type="binding site" evidence="1">
    <location>
        <position position="146"/>
    </location>
    <ligand>
        <name>substrate</name>
    </ligand>
</feature>
<feature type="binding site" evidence="1">
    <location>
        <position position="197"/>
    </location>
    <ligand>
        <name>ATP</name>
        <dbReference type="ChEBI" id="CHEBI:30616"/>
    </ligand>
</feature>
<feature type="binding site" evidence="1">
    <location>
        <position position="314"/>
    </location>
    <ligand>
        <name>ATP</name>
        <dbReference type="ChEBI" id="CHEBI:30616"/>
    </ligand>
</feature>
<feature type="binding site" evidence="1">
    <location>
        <begin position="340"/>
        <end position="343"/>
    </location>
    <ligand>
        <name>ATP</name>
        <dbReference type="ChEBI" id="CHEBI:30616"/>
    </ligand>
</feature>
<feature type="modified residue" description="N6-acetyllysine" evidence="1">
    <location>
        <position position="84"/>
    </location>
</feature>
<evidence type="ECO:0000250" key="1"/>
<evidence type="ECO:0000305" key="2"/>
<protein>
    <recommendedName>
        <fullName>Phosphoglycerate kinase</fullName>
        <ecNumber>2.7.2.3</ecNumber>
    </recommendedName>
</protein>
<proteinExistence type="inferred from homology"/>
<keyword id="KW-0007">Acetylation</keyword>
<keyword id="KW-0067">ATP-binding</keyword>
<keyword id="KW-0963">Cytoplasm</keyword>
<keyword id="KW-0324">Glycolysis</keyword>
<keyword id="KW-0418">Kinase</keyword>
<keyword id="KW-0547">Nucleotide-binding</keyword>
<keyword id="KW-1185">Reference proteome</keyword>
<keyword id="KW-0808">Transferase</keyword>
<gene>
    <name type="primary">pgk</name>
    <name type="ordered locus">Z4265</name>
    <name type="ordered locus">ECs3797</name>
</gene>
<name>PGK_ECO57</name>
<reference key="1">
    <citation type="journal article" date="2001" name="Nature">
        <title>Genome sequence of enterohaemorrhagic Escherichia coli O157:H7.</title>
        <authorList>
            <person name="Perna N.T."/>
            <person name="Plunkett G. III"/>
            <person name="Burland V."/>
            <person name="Mau B."/>
            <person name="Glasner J.D."/>
            <person name="Rose D.J."/>
            <person name="Mayhew G.F."/>
            <person name="Evans P.S."/>
            <person name="Gregor J."/>
            <person name="Kirkpatrick H.A."/>
            <person name="Posfai G."/>
            <person name="Hackett J."/>
            <person name="Klink S."/>
            <person name="Boutin A."/>
            <person name="Shao Y."/>
            <person name="Miller L."/>
            <person name="Grotbeck E.J."/>
            <person name="Davis N.W."/>
            <person name="Lim A."/>
            <person name="Dimalanta E.T."/>
            <person name="Potamousis K."/>
            <person name="Apodaca J."/>
            <person name="Anantharaman T.S."/>
            <person name="Lin J."/>
            <person name="Yen G."/>
            <person name="Schwartz D.C."/>
            <person name="Welch R.A."/>
            <person name="Blattner F.R."/>
        </authorList>
    </citation>
    <scope>NUCLEOTIDE SEQUENCE [LARGE SCALE GENOMIC DNA]</scope>
    <source>
        <strain>O157:H7 / EDL933 / ATCC 700927 / EHEC</strain>
    </source>
</reference>
<reference key="2">
    <citation type="journal article" date="2001" name="DNA Res.">
        <title>Complete genome sequence of enterohemorrhagic Escherichia coli O157:H7 and genomic comparison with a laboratory strain K-12.</title>
        <authorList>
            <person name="Hayashi T."/>
            <person name="Makino K."/>
            <person name="Ohnishi M."/>
            <person name="Kurokawa K."/>
            <person name="Ishii K."/>
            <person name="Yokoyama K."/>
            <person name="Han C.-G."/>
            <person name="Ohtsubo E."/>
            <person name="Nakayama K."/>
            <person name="Murata T."/>
            <person name="Tanaka M."/>
            <person name="Tobe T."/>
            <person name="Iida T."/>
            <person name="Takami H."/>
            <person name="Honda T."/>
            <person name="Sasakawa C."/>
            <person name="Ogasawara N."/>
            <person name="Yasunaga T."/>
            <person name="Kuhara S."/>
            <person name="Shiba T."/>
            <person name="Hattori M."/>
            <person name="Shinagawa H."/>
        </authorList>
    </citation>
    <scope>NUCLEOTIDE SEQUENCE [LARGE SCALE GENOMIC DNA]</scope>
    <source>
        <strain>O157:H7 / Sakai / RIMD 0509952 / EHEC</strain>
    </source>
</reference>